<dbReference type="EMBL" id="AAFC03022803">
    <property type="status" value="NOT_ANNOTATED_CDS"/>
    <property type="molecule type" value="Genomic_DNA"/>
</dbReference>
<dbReference type="EMBL" id="BC151799">
    <property type="protein sequence ID" value="AAI51800.1"/>
    <property type="status" value="ALT_SEQ"/>
    <property type="molecule type" value="mRNA"/>
</dbReference>
<dbReference type="RefSeq" id="XP_005195827.1">
    <property type="nucleotide sequence ID" value="XM_005195770.3"/>
</dbReference>
<dbReference type="RefSeq" id="XP_005221022.1">
    <property type="nucleotide sequence ID" value="XM_005220965.5"/>
</dbReference>
<dbReference type="FunCoup" id="A7E3C4">
    <property type="interactions" value="87"/>
</dbReference>
<dbReference type="STRING" id="9913.ENSBTAP00000017992"/>
<dbReference type="GlyCosmos" id="A7E3C4">
    <property type="glycosylation" value="1 site, No reported glycans"/>
</dbReference>
<dbReference type="GlyGen" id="A7E3C4">
    <property type="glycosylation" value="1 site"/>
</dbReference>
<dbReference type="PaxDb" id="9913-ENSBTAP00000017992"/>
<dbReference type="Ensembl" id="ENSBTAT00000017992.7">
    <property type="protein sequence ID" value="ENSBTAP00000017992.5"/>
    <property type="gene ID" value="ENSBTAG00000013532.7"/>
</dbReference>
<dbReference type="Ensembl" id="ENSBTAT00000089884.1">
    <property type="protein sequence ID" value="ENSBTAP00000085359.1"/>
    <property type="gene ID" value="ENSBTAG00000013532.7"/>
</dbReference>
<dbReference type="Ensembl" id="ENSBTAT00000101443.1">
    <property type="protein sequence ID" value="ENSBTAP00000084144.1"/>
    <property type="gene ID" value="ENSBTAG00000013532.7"/>
</dbReference>
<dbReference type="Ensembl" id="ENSBTAT00000101740.1">
    <property type="protein sequence ID" value="ENSBTAP00000079217.1"/>
    <property type="gene ID" value="ENSBTAG00000013532.7"/>
</dbReference>
<dbReference type="Ensembl" id="ENSBTAT00000133475.1">
    <property type="protein sequence ID" value="ENSBTAP00000087369.1"/>
    <property type="gene ID" value="ENSBTAG00000013532.7"/>
</dbReference>
<dbReference type="GeneID" id="614821"/>
<dbReference type="KEGG" id="bta:614821"/>
<dbReference type="CTD" id="100528020"/>
<dbReference type="VEuPathDB" id="HostDB:ENSBTAG00000013532"/>
<dbReference type="VGNC" id="VGNC:55829">
    <property type="gene designation" value="FAM187A"/>
</dbReference>
<dbReference type="eggNOG" id="ENOG502QRCU">
    <property type="taxonomic scope" value="Eukaryota"/>
</dbReference>
<dbReference type="GeneTree" id="ENSGT00530000063991"/>
<dbReference type="HOGENOM" id="CLU_054403_0_0_1"/>
<dbReference type="InParanoid" id="A7E3C4"/>
<dbReference type="OMA" id="AWDKDST"/>
<dbReference type="OrthoDB" id="9899560at2759"/>
<dbReference type="TreeFam" id="TF332178"/>
<dbReference type="Proteomes" id="UP000009136">
    <property type="component" value="Chromosome 19"/>
</dbReference>
<dbReference type="Bgee" id="ENSBTAG00000013532">
    <property type="expression patterns" value="Expressed in midbrain and 36 other cell types or tissues"/>
</dbReference>
<dbReference type="GO" id="GO:0016020">
    <property type="term" value="C:membrane"/>
    <property type="evidence" value="ECO:0007669"/>
    <property type="project" value="UniProtKB-SubCell"/>
</dbReference>
<dbReference type="Gene3D" id="2.60.40.10">
    <property type="entry name" value="Immunoglobulins"/>
    <property type="match status" value="1"/>
</dbReference>
<dbReference type="InterPro" id="IPR039311">
    <property type="entry name" value="FAM187A/B"/>
</dbReference>
<dbReference type="InterPro" id="IPR007110">
    <property type="entry name" value="Ig-like_dom"/>
</dbReference>
<dbReference type="InterPro" id="IPR036179">
    <property type="entry name" value="Ig-like_dom_sf"/>
</dbReference>
<dbReference type="InterPro" id="IPR013783">
    <property type="entry name" value="Ig-like_fold"/>
</dbReference>
<dbReference type="InterPro" id="IPR003599">
    <property type="entry name" value="Ig_sub"/>
</dbReference>
<dbReference type="InterPro" id="IPR013106">
    <property type="entry name" value="Ig_V-set"/>
</dbReference>
<dbReference type="PANTHER" id="PTHR32178">
    <property type="entry name" value="FAM187"/>
    <property type="match status" value="1"/>
</dbReference>
<dbReference type="PANTHER" id="PTHR32178:SF7">
    <property type="entry name" value="IG-LIKE V-TYPE DOMAIN-CONTAINING PROTEIN FAM187A"/>
    <property type="match status" value="1"/>
</dbReference>
<dbReference type="Pfam" id="PF07686">
    <property type="entry name" value="V-set"/>
    <property type="match status" value="1"/>
</dbReference>
<dbReference type="SMART" id="SM00409">
    <property type="entry name" value="IG"/>
    <property type="match status" value="2"/>
</dbReference>
<dbReference type="SUPFAM" id="SSF48726">
    <property type="entry name" value="Immunoglobulin"/>
    <property type="match status" value="2"/>
</dbReference>
<dbReference type="PROSITE" id="PS50835">
    <property type="entry name" value="IG_LIKE"/>
    <property type="match status" value="1"/>
</dbReference>
<reference key="1">
    <citation type="journal article" date="2009" name="Science">
        <title>The genome sequence of taurine cattle: a window to ruminant biology and evolution.</title>
        <authorList>
            <consortium name="The bovine genome sequencing and analysis consortium"/>
        </authorList>
    </citation>
    <scope>NUCLEOTIDE SEQUENCE [LARGE SCALE GENOMIC DNA]</scope>
    <source>
        <strain>Hereford</strain>
    </source>
</reference>
<reference key="2">
    <citation type="submission" date="2007-08" db="EMBL/GenBank/DDBJ databases">
        <authorList>
            <consortium name="NIH - Mammalian Gene Collection (MGC) project"/>
        </authorList>
    </citation>
    <scope>NUCLEOTIDE SEQUENCE [LARGE SCALE MRNA] OF 1-395</scope>
    <source>
        <strain>Crossbred X Angus</strain>
        <tissue>Liver</tissue>
    </source>
</reference>
<organism>
    <name type="scientific">Bos taurus</name>
    <name type="common">Bovine</name>
    <dbReference type="NCBI Taxonomy" id="9913"/>
    <lineage>
        <taxon>Eukaryota</taxon>
        <taxon>Metazoa</taxon>
        <taxon>Chordata</taxon>
        <taxon>Craniata</taxon>
        <taxon>Vertebrata</taxon>
        <taxon>Euteleostomi</taxon>
        <taxon>Mammalia</taxon>
        <taxon>Eutheria</taxon>
        <taxon>Laurasiatheria</taxon>
        <taxon>Artiodactyla</taxon>
        <taxon>Ruminantia</taxon>
        <taxon>Pecora</taxon>
        <taxon>Bovidae</taxon>
        <taxon>Bovinae</taxon>
        <taxon>Bos</taxon>
    </lineage>
</organism>
<gene>
    <name type="primary">FAM187A</name>
</gene>
<keyword id="KW-1015">Disulfide bond</keyword>
<keyword id="KW-0325">Glycoprotein</keyword>
<keyword id="KW-0393">Immunoglobulin domain</keyword>
<keyword id="KW-0472">Membrane</keyword>
<keyword id="KW-1185">Reference proteome</keyword>
<keyword id="KW-0732">Signal</keyword>
<keyword id="KW-0812">Transmembrane</keyword>
<keyword id="KW-1133">Transmembrane helix</keyword>
<sequence length="421" mass="48434">MNLAHTTVLLWAWGSLQAFEIVEKENIFQRTPCPAFLMFDNAAYLTDMSFELPCPCKPEEVSAVVWYYQKHLGSSHTKVLTDFDGRVLTEAAQVRVGSDMLVRFSIRMFSLLVFRAQPEDSGLYFCGTRKGDYFYAYDVDIQSSEGMVATFKDQGQEPLEDEYHGSLRVFTTFWEWTPCDRCGVRGEQWRIGLCYLQSPDLSPRYRKILPNVVSCGSRAVPRQLRAKASDHNPELLVRSCLMPCEKKKKVQEGVMAIFNYVSKVGSRPWLPQVPIQFHQQRLGHGLIISCPGARPEHAVAWDKDHQYLYRTQYLKGVNGSMRVFIDHGNHLHIRFTQLEDRGIYYCWRQGERIAGFRLGVTSPGRYPVSFSDPETRAALGLILIGYMLITVIFISIHLCRCCCYLFRFCPNFSPRLSRPQL</sequence>
<evidence type="ECO:0000255" key="1"/>
<evidence type="ECO:0000255" key="2">
    <source>
        <dbReference type="PROSITE-ProRule" id="PRU00114"/>
    </source>
</evidence>
<evidence type="ECO:0000305" key="3"/>
<proteinExistence type="evidence at transcript level"/>
<protein>
    <recommendedName>
        <fullName>Ig-like V-type domain-containing protein FAM187A</fullName>
    </recommendedName>
</protein>
<comment type="subcellular location">
    <subcellularLocation>
        <location evidence="3">Membrane</location>
        <topology evidence="3">Single-pass type I membrane protein</topology>
    </subcellularLocation>
</comment>
<comment type="similarity">
    <text evidence="3">Belongs to the FAM187 family.</text>
</comment>
<comment type="sequence caution" evidence="3">
    <conflict type="miscellaneous discrepancy">
        <sequence resource="EMBL-CDS" id="AAI51800"/>
    </conflict>
    <text>Contaminating sequence. Potential poly-A sequence.</text>
</comment>
<feature type="signal peptide" evidence="1">
    <location>
        <begin position="1"/>
        <end position="18"/>
    </location>
</feature>
<feature type="chain" id="PRO_0000340653" description="Ig-like V-type domain-containing protein FAM187A">
    <location>
        <begin position="19"/>
        <end position="421"/>
    </location>
</feature>
<feature type="topological domain" description="Extracellular" evidence="1">
    <location>
        <begin position="19"/>
        <end position="377"/>
    </location>
</feature>
<feature type="transmembrane region" description="Helical" evidence="1">
    <location>
        <begin position="378"/>
        <end position="398"/>
    </location>
</feature>
<feature type="topological domain" description="Cytoplasmic" evidence="1">
    <location>
        <begin position="399"/>
        <end position="421"/>
    </location>
</feature>
<feature type="domain" description="Ig-like V-type">
    <location>
        <begin position="268"/>
        <end position="362"/>
    </location>
</feature>
<feature type="glycosylation site" description="N-linked (GlcNAc...) asparagine" evidence="1">
    <location>
        <position position="318"/>
    </location>
</feature>
<feature type="disulfide bond" evidence="2">
    <location>
        <begin position="290"/>
        <end position="346"/>
    </location>
</feature>
<feature type="sequence conflict" description="In Ref. 2; AAI51800." evidence="3" ref="2">
    <original>F</original>
    <variation>L</variation>
    <location>
        <position position="134"/>
    </location>
</feature>
<feature type="sequence conflict" description="In Ref. 2; AAI51800." evidence="3" ref="2">
    <original>L</original>
    <variation>I</variation>
    <location>
        <position position="381"/>
    </location>
</feature>
<accession>A7E3C4</accession>
<name>F187A_BOVIN</name>